<sequence length="514" mass="58465">MARPWLSASVLITAVILLVDYLNYYRLRKRLGGIPVVGDASYFWRRIRWTESDTNFQKVIQHGYDTFSKKAKPFAFWGQHEDFILVLPPGSCEEVKHLGPEKLNFLQAVEDSYHFKLHTNILGRSHVDAVRQSVNKNMNQLHEIVVKKAEETIPKLFDDIAASNEPFAAFLTIWHLVHIVSASYLVGTEFCANEEYLQAIEYYCINVPNFIYGYFWVPVPLRRLYWYLSPQGYKVRACKAKLKTFIVPKIRETISAWQNGQKSSSYTLLGAMLDLKAQKGQIKRDPTAMTKAELERQIDIFSDEMIFTGFDSAGPVACMVTQLLFEALRDKDLTKALRQELKSALEANNGQWNVQAMNLTPKLDSFTRESLRVNGPTLLSVTRTVMEPMQLKSGLSLQSGSIISSPSWLIHNDEDNYENAHQFDPYRFYNPSTNAVTTKVTTASTNFLGYGYGTQMCPGRHLGIKMSQILFSKLLMRYDGEFADAKAGKPANIVTSGQVLPPYYAKVILKRRGI</sequence>
<keyword id="KW-0349">Heme</keyword>
<keyword id="KW-0408">Iron</keyword>
<keyword id="KW-0472">Membrane</keyword>
<keyword id="KW-0479">Metal-binding</keyword>
<keyword id="KW-0503">Monooxygenase</keyword>
<keyword id="KW-0560">Oxidoreductase</keyword>
<keyword id="KW-0812">Transmembrane</keyword>
<keyword id="KW-1133">Transmembrane helix</keyword>
<protein>
    <recommendedName>
        <fullName evidence="5">Cytochrome P450 monooxygenase verB</fullName>
        <ecNumber evidence="7">1.-.-.-</ecNumber>
    </recommendedName>
    <alternativeName>
        <fullName evidence="5">Verticillin biosynthesis cluster protein B</fullName>
    </alternativeName>
</protein>
<proteinExistence type="evidence at transcript level"/>
<accession>A0A1U9YI05</accession>
<name>VERB_CLORO</name>
<organism>
    <name type="scientific">Clonostachys rogersoniana</name>
    <dbReference type="NCBI Taxonomy" id="122658"/>
    <lineage>
        <taxon>Eukaryota</taxon>
        <taxon>Fungi</taxon>
        <taxon>Dikarya</taxon>
        <taxon>Ascomycota</taxon>
        <taxon>Pezizomycotina</taxon>
        <taxon>Sordariomycetes</taxon>
        <taxon>Hypocreomycetidae</taxon>
        <taxon>Hypocreales</taxon>
        <taxon>Bionectriaceae</taxon>
        <taxon>Clonostachys</taxon>
    </lineage>
</organism>
<reference key="1">
    <citation type="journal article" date="2017" name="Fungal Genet. Biol.">
        <title>Identification and characterization of the verticillin biosynthetic gene cluster in Clonostachys rogersoniana.</title>
        <authorList>
            <person name="Wang Y."/>
            <person name="Hu P."/>
            <person name="Pan Y."/>
            <person name="Zhu Y."/>
            <person name="Liu X."/>
            <person name="Che Y."/>
            <person name="Liu G."/>
        </authorList>
    </citation>
    <scope>NUCLEOTIDE SEQUENCE [GENOMIC DNA]</scope>
    <scope>FUNCTION</scope>
    <scope>DISRUPTION PHENOTYPE</scope>
    <scope>PATHWAY</scope>
    <source>
        <strain>XZC04-CC-302</strain>
    </source>
</reference>
<reference key="2">
    <citation type="journal article" date="2017" name="Microbiology">
        <title>VerZ, a Zn(II)2Cys6 DNA-binding protein, regulates the biosynthesis of verticillin in Clonostachys rogersoniana.</title>
        <authorList>
            <person name="Guo Z."/>
            <person name="Hao T."/>
            <person name="Wang Y."/>
            <person name="Pan Y."/>
            <person name="Ren F."/>
            <person name="Liu X."/>
            <person name="Che Y."/>
            <person name="Liu G."/>
        </authorList>
    </citation>
    <scope>INDUCTION</scope>
</reference>
<dbReference type="EC" id="1.-.-.-" evidence="7"/>
<dbReference type="EMBL" id="KY359203">
    <property type="protein sequence ID" value="AQZ42168.1"/>
    <property type="molecule type" value="Genomic_DNA"/>
</dbReference>
<dbReference type="SMR" id="A0A1U9YI05"/>
<dbReference type="GO" id="GO:0016020">
    <property type="term" value="C:membrane"/>
    <property type="evidence" value="ECO:0007669"/>
    <property type="project" value="UniProtKB-SubCell"/>
</dbReference>
<dbReference type="GO" id="GO:0020037">
    <property type="term" value="F:heme binding"/>
    <property type="evidence" value="ECO:0007669"/>
    <property type="project" value="InterPro"/>
</dbReference>
<dbReference type="GO" id="GO:0005506">
    <property type="term" value="F:iron ion binding"/>
    <property type="evidence" value="ECO:0007669"/>
    <property type="project" value="InterPro"/>
</dbReference>
<dbReference type="GO" id="GO:0004497">
    <property type="term" value="F:monooxygenase activity"/>
    <property type="evidence" value="ECO:0007669"/>
    <property type="project" value="UniProtKB-KW"/>
</dbReference>
<dbReference type="GO" id="GO:0016705">
    <property type="term" value="F:oxidoreductase activity, acting on paired donors, with incorporation or reduction of molecular oxygen"/>
    <property type="evidence" value="ECO:0007669"/>
    <property type="project" value="InterPro"/>
</dbReference>
<dbReference type="GO" id="GO:0019748">
    <property type="term" value="P:secondary metabolic process"/>
    <property type="evidence" value="ECO:0007669"/>
    <property type="project" value="UniProtKB-ARBA"/>
</dbReference>
<dbReference type="CDD" id="cd11041">
    <property type="entry name" value="CYP503A1-like"/>
    <property type="match status" value="1"/>
</dbReference>
<dbReference type="Gene3D" id="1.10.630.10">
    <property type="entry name" value="Cytochrome P450"/>
    <property type="match status" value="1"/>
</dbReference>
<dbReference type="InterPro" id="IPR001128">
    <property type="entry name" value="Cyt_P450"/>
</dbReference>
<dbReference type="InterPro" id="IPR002403">
    <property type="entry name" value="Cyt_P450_E_grp-IV"/>
</dbReference>
<dbReference type="InterPro" id="IPR036396">
    <property type="entry name" value="Cyt_P450_sf"/>
</dbReference>
<dbReference type="PANTHER" id="PTHR46206">
    <property type="entry name" value="CYTOCHROME P450"/>
    <property type="match status" value="1"/>
</dbReference>
<dbReference type="PANTHER" id="PTHR46206:SF4">
    <property type="entry name" value="P450, PUTATIVE (EUROFUNG)-RELATED"/>
    <property type="match status" value="1"/>
</dbReference>
<dbReference type="Pfam" id="PF00067">
    <property type="entry name" value="p450"/>
    <property type="match status" value="1"/>
</dbReference>
<dbReference type="PRINTS" id="PR00465">
    <property type="entry name" value="EP450IV"/>
</dbReference>
<dbReference type="SUPFAM" id="SSF48264">
    <property type="entry name" value="Cytochrome P450"/>
    <property type="match status" value="1"/>
</dbReference>
<gene>
    <name evidence="5" type="primary">verB</name>
</gene>
<comment type="function">
    <text evidence="3 7">Cytochrome P450 monooxygenase; part of the gene cluster that mediates the biosynthesis of 11'-deoxyverticillin A, one of the dimeric epipolythiodioxopiperazines (ETPs) from the verticillin family that act as mycotoxins (PubMed:28376389). 11'-deoxyverticillin A is required for normal conidiation (PubMed:28376389). The nonribosomal peptide synthetase verP is speculated to be responsible for condensation of amino acids to form the carbon skeleton of verticillin, whereas the cluster-specific tailoring enzymes are involved in further modifications leading to the production of 11'-deoxyverticillin A (Probable).</text>
</comment>
<comment type="cofactor">
    <cofactor evidence="1">
        <name>heme</name>
        <dbReference type="ChEBI" id="CHEBI:30413"/>
    </cofactor>
</comment>
<comment type="pathway">
    <text evidence="3">Mycotoxin biosynthesis.</text>
</comment>
<comment type="subcellular location">
    <subcellularLocation>
        <location evidence="2">Membrane</location>
        <topology evidence="2">Single-pass membrane protein</topology>
    </subcellularLocation>
</comment>
<comment type="induction">
    <text evidence="4">Expression is regulated by the cluster-specific regulator verZ.</text>
</comment>
<comment type="disruption phenotype">
    <text evidence="3">Completely abolishes the 11'-deoxyverticillin A production.</text>
</comment>
<comment type="similarity">
    <text evidence="6">Belongs to the cytochrome P450 family.</text>
</comment>
<feature type="chain" id="PRO_0000450160" description="Cytochrome P450 monooxygenase verB">
    <location>
        <begin position="1"/>
        <end position="514"/>
    </location>
</feature>
<feature type="transmembrane region" description="Helical" evidence="2">
    <location>
        <begin position="5"/>
        <end position="25"/>
    </location>
</feature>
<feature type="binding site" description="axial binding residue">
    <location>
        <position position="457"/>
    </location>
    <ligand>
        <name>heme</name>
        <dbReference type="ChEBI" id="CHEBI:30413"/>
    </ligand>
    <ligandPart>
        <name>Fe</name>
        <dbReference type="ChEBI" id="CHEBI:18248"/>
    </ligandPart>
</feature>
<evidence type="ECO:0000250" key="1">
    <source>
        <dbReference type="UniProtKB" id="P04798"/>
    </source>
</evidence>
<evidence type="ECO:0000255" key="2"/>
<evidence type="ECO:0000269" key="3">
    <source>
    </source>
</evidence>
<evidence type="ECO:0000269" key="4">
    <source>
    </source>
</evidence>
<evidence type="ECO:0000303" key="5">
    <source>
    </source>
</evidence>
<evidence type="ECO:0000305" key="6"/>
<evidence type="ECO:0000305" key="7">
    <source>
    </source>
</evidence>